<proteinExistence type="inferred from homology"/>
<gene>
    <name evidence="1" type="primary">nusB</name>
    <name type="ordered locus">YE3159</name>
</gene>
<name>NUSB_YERE8</name>
<feature type="chain" id="PRO_1000023787" description="Transcription antitermination protein NusB">
    <location>
        <begin position="1"/>
        <end position="138"/>
    </location>
</feature>
<evidence type="ECO:0000255" key="1">
    <source>
        <dbReference type="HAMAP-Rule" id="MF_00073"/>
    </source>
</evidence>
<reference key="1">
    <citation type="journal article" date="2006" name="PLoS Genet.">
        <title>The complete genome sequence and comparative genome analysis of the high pathogenicity Yersinia enterocolitica strain 8081.</title>
        <authorList>
            <person name="Thomson N.R."/>
            <person name="Howard S."/>
            <person name="Wren B.W."/>
            <person name="Holden M.T.G."/>
            <person name="Crossman L."/>
            <person name="Challis G.L."/>
            <person name="Churcher C."/>
            <person name="Mungall K."/>
            <person name="Brooks K."/>
            <person name="Chillingworth T."/>
            <person name="Feltwell T."/>
            <person name="Abdellah Z."/>
            <person name="Hauser H."/>
            <person name="Jagels K."/>
            <person name="Maddison M."/>
            <person name="Moule S."/>
            <person name="Sanders M."/>
            <person name="Whitehead S."/>
            <person name="Quail M.A."/>
            <person name="Dougan G."/>
            <person name="Parkhill J."/>
            <person name="Prentice M.B."/>
        </authorList>
    </citation>
    <scope>NUCLEOTIDE SEQUENCE [LARGE SCALE GENOMIC DNA]</scope>
    <source>
        <strain>NCTC 13174 / 8081</strain>
    </source>
</reference>
<comment type="function">
    <text evidence="1">Involved in transcription antitermination. Required for transcription of ribosomal RNA (rRNA) genes. Binds specifically to the boxA antiterminator sequence of the ribosomal RNA (rrn) operons.</text>
</comment>
<comment type="similarity">
    <text evidence="1">Belongs to the NusB family.</text>
</comment>
<keyword id="KW-0694">RNA-binding</keyword>
<keyword id="KW-0804">Transcription</keyword>
<keyword id="KW-0889">Transcription antitermination</keyword>
<keyword id="KW-0805">Transcription regulation</keyword>
<protein>
    <recommendedName>
        <fullName evidence="1">Transcription antitermination protein NusB</fullName>
    </recommendedName>
    <alternativeName>
        <fullName evidence="1">Antitermination factor NusB</fullName>
    </alternativeName>
</protein>
<accession>A1JNS2</accession>
<sequence>MKPAARRRARECAVQALYSWQLSKNDIADVELQFLSEQDVKDVDIAYFRELLSGVAVNAASLDALMAPVLSRQLEELGQVERAVLRIALFELSKRDDVPYKVAINEAIELAKTFGAADSHKFVNGVLDKVAPTVRKRK</sequence>
<dbReference type="EMBL" id="AM286415">
    <property type="protein sequence ID" value="CAL13193.1"/>
    <property type="molecule type" value="Genomic_DNA"/>
</dbReference>
<dbReference type="RefSeq" id="WP_005166503.1">
    <property type="nucleotide sequence ID" value="NC_008800.1"/>
</dbReference>
<dbReference type="RefSeq" id="YP_001007340.1">
    <property type="nucleotide sequence ID" value="NC_008800.1"/>
</dbReference>
<dbReference type="SMR" id="A1JNS2"/>
<dbReference type="GeneID" id="93971837"/>
<dbReference type="KEGG" id="yen:YE3159"/>
<dbReference type="PATRIC" id="fig|393305.7.peg.3360"/>
<dbReference type="eggNOG" id="COG0781">
    <property type="taxonomic scope" value="Bacteria"/>
</dbReference>
<dbReference type="HOGENOM" id="CLU_087843_4_1_6"/>
<dbReference type="OrthoDB" id="9789556at2"/>
<dbReference type="Proteomes" id="UP000000642">
    <property type="component" value="Chromosome"/>
</dbReference>
<dbReference type="GO" id="GO:0005829">
    <property type="term" value="C:cytosol"/>
    <property type="evidence" value="ECO:0007669"/>
    <property type="project" value="TreeGrafter"/>
</dbReference>
<dbReference type="GO" id="GO:0003723">
    <property type="term" value="F:RNA binding"/>
    <property type="evidence" value="ECO:0007669"/>
    <property type="project" value="UniProtKB-UniRule"/>
</dbReference>
<dbReference type="GO" id="GO:0006353">
    <property type="term" value="P:DNA-templated transcription termination"/>
    <property type="evidence" value="ECO:0007669"/>
    <property type="project" value="UniProtKB-UniRule"/>
</dbReference>
<dbReference type="GO" id="GO:0031564">
    <property type="term" value="P:transcription antitermination"/>
    <property type="evidence" value="ECO:0007669"/>
    <property type="project" value="UniProtKB-KW"/>
</dbReference>
<dbReference type="CDD" id="cd00619">
    <property type="entry name" value="Terminator_NusB"/>
    <property type="match status" value="1"/>
</dbReference>
<dbReference type="FunFam" id="1.10.940.10:FF:000001">
    <property type="entry name" value="Transcription antitermination factor NusB"/>
    <property type="match status" value="1"/>
</dbReference>
<dbReference type="Gene3D" id="1.10.940.10">
    <property type="entry name" value="NusB-like"/>
    <property type="match status" value="1"/>
</dbReference>
<dbReference type="HAMAP" id="MF_00073">
    <property type="entry name" value="NusB"/>
    <property type="match status" value="1"/>
</dbReference>
<dbReference type="InterPro" id="IPR035926">
    <property type="entry name" value="NusB-like_sf"/>
</dbReference>
<dbReference type="InterPro" id="IPR011605">
    <property type="entry name" value="NusB_fam"/>
</dbReference>
<dbReference type="InterPro" id="IPR006027">
    <property type="entry name" value="NusB_RsmB_TIM44"/>
</dbReference>
<dbReference type="NCBIfam" id="TIGR01951">
    <property type="entry name" value="nusB"/>
    <property type="match status" value="1"/>
</dbReference>
<dbReference type="PANTHER" id="PTHR11078:SF3">
    <property type="entry name" value="ANTITERMINATION NUSB DOMAIN-CONTAINING PROTEIN"/>
    <property type="match status" value="1"/>
</dbReference>
<dbReference type="PANTHER" id="PTHR11078">
    <property type="entry name" value="N UTILIZATION SUBSTANCE PROTEIN B-RELATED"/>
    <property type="match status" value="1"/>
</dbReference>
<dbReference type="Pfam" id="PF01029">
    <property type="entry name" value="NusB"/>
    <property type="match status" value="1"/>
</dbReference>
<dbReference type="SUPFAM" id="SSF48013">
    <property type="entry name" value="NusB-like"/>
    <property type="match status" value="1"/>
</dbReference>
<organism>
    <name type="scientific">Yersinia enterocolitica serotype O:8 / biotype 1B (strain NCTC 13174 / 8081)</name>
    <dbReference type="NCBI Taxonomy" id="393305"/>
    <lineage>
        <taxon>Bacteria</taxon>
        <taxon>Pseudomonadati</taxon>
        <taxon>Pseudomonadota</taxon>
        <taxon>Gammaproteobacteria</taxon>
        <taxon>Enterobacterales</taxon>
        <taxon>Yersiniaceae</taxon>
        <taxon>Yersinia</taxon>
    </lineage>
</organism>